<keyword id="KW-0963">Cytoplasm</keyword>
<keyword id="KW-0378">Hydrolase</keyword>
<accession>B5YUX2</accession>
<evidence type="ECO:0000255" key="1">
    <source>
        <dbReference type="HAMAP-Rule" id="MF_01954"/>
    </source>
</evidence>
<sequence length="106" mass="11761">MIPGEYKVKPGYIELNIGRATCSIIVENHGDRPIQVGSHYHFAEVNPALKFDRQKARGYRLNIAAGTAVRFEPGQKREVELVALSGARIVHGFRGDIMGELEANDE</sequence>
<dbReference type="EC" id="3.5.1.5" evidence="1"/>
<dbReference type="EMBL" id="CP001164">
    <property type="protein sequence ID" value="ACI34959.1"/>
    <property type="molecule type" value="Genomic_DNA"/>
</dbReference>
<dbReference type="RefSeq" id="WP_000612150.1">
    <property type="nucleotide sequence ID" value="NC_011353.1"/>
</dbReference>
<dbReference type="SMR" id="B5YUX2"/>
<dbReference type="KEGG" id="ecf:ECH74115_1322"/>
<dbReference type="HOGENOM" id="CLU_129707_1_1_6"/>
<dbReference type="UniPathway" id="UPA00258">
    <property type="reaction ID" value="UER00370"/>
</dbReference>
<dbReference type="GO" id="GO:0035550">
    <property type="term" value="C:urease complex"/>
    <property type="evidence" value="ECO:0007669"/>
    <property type="project" value="InterPro"/>
</dbReference>
<dbReference type="GO" id="GO:0009039">
    <property type="term" value="F:urease activity"/>
    <property type="evidence" value="ECO:0007669"/>
    <property type="project" value="UniProtKB-UniRule"/>
</dbReference>
<dbReference type="GO" id="GO:0043419">
    <property type="term" value="P:urea catabolic process"/>
    <property type="evidence" value="ECO:0007669"/>
    <property type="project" value="UniProtKB-UniRule"/>
</dbReference>
<dbReference type="CDD" id="cd00407">
    <property type="entry name" value="Urease_beta"/>
    <property type="match status" value="1"/>
</dbReference>
<dbReference type="FunFam" id="2.10.150.10:FF:000001">
    <property type="entry name" value="Urease subunit beta"/>
    <property type="match status" value="1"/>
</dbReference>
<dbReference type="Gene3D" id="2.10.150.10">
    <property type="entry name" value="Urease, beta subunit"/>
    <property type="match status" value="1"/>
</dbReference>
<dbReference type="HAMAP" id="MF_01954">
    <property type="entry name" value="Urease_beta"/>
    <property type="match status" value="1"/>
</dbReference>
<dbReference type="InterPro" id="IPR002019">
    <property type="entry name" value="Urease_beta-like"/>
</dbReference>
<dbReference type="InterPro" id="IPR036461">
    <property type="entry name" value="Urease_betasu_sf"/>
</dbReference>
<dbReference type="InterPro" id="IPR050069">
    <property type="entry name" value="Urease_subunit"/>
</dbReference>
<dbReference type="NCBIfam" id="NF009682">
    <property type="entry name" value="PRK13203.1"/>
    <property type="match status" value="1"/>
</dbReference>
<dbReference type="NCBIfam" id="TIGR00192">
    <property type="entry name" value="urease_beta"/>
    <property type="match status" value="1"/>
</dbReference>
<dbReference type="PANTHER" id="PTHR33569">
    <property type="entry name" value="UREASE"/>
    <property type="match status" value="1"/>
</dbReference>
<dbReference type="PANTHER" id="PTHR33569:SF1">
    <property type="entry name" value="UREASE"/>
    <property type="match status" value="1"/>
</dbReference>
<dbReference type="Pfam" id="PF00699">
    <property type="entry name" value="Urease_beta"/>
    <property type="match status" value="1"/>
</dbReference>
<dbReference type="SUPFAM" id="SSF51278">
    <property type="entry name" value="Urease, beta-subunit"/>
    <property type="match status" value="1"/>
</dbReference>
<organism>
    <name type="scientific">Escherichia coli O157:H7 (strain EC4115 / EHEC)</name>
    <dbReference type="NCBI Taxonomy" id="444450"/>
    <lineage>
        <taxon>Bacteria</taxon>
        <taxon>Pseudomonadati</taxon>
        <taxon>Pseudomonadota</taxon>
        <taxon>Gammaproteobacteria</taxon>
        <taxon>Enterobacterales</taxon>
        <taxon>Enterobacteriaceae</taxon>
        <taxon>Escherichia</taxon>
    </lineage>
</organism>
<gene>
    <name evidence="1" type="primary">ureB</name>
    <name type="ordered locus">ECH74115_1322</name>
</gene>
<name>URE2_ECO5E</name>
<feature type="chain" id="PRO_1000188922" description="Urease subunit beta">
    <location>
        <begin position="1"/>
        <end position="106"/>
    </location>
</feature>
<proteinExistence type="inferred from homology"/>
<protein>
    <recommendedName>
        <fullName evidence="1">Urease subunit beta</fullName>
        <ecNumber evidence="1">3.5.1.5</ecNumber>
    </recommendedName>
    <alternativeName>
        <fullName evidence="1">Urea amidohydrolase subunit beta</fullName>
    </alternativeName>
</protein>
<reference key="1">
    <citation type="journal article" date="2011" name="Proc. Natl. Acad. Sci. U.S.A.">
        <title>Genomic anatomy of Escherichia coli O157:H7 outbreaks.</title>
        <authorList>
            <person name="Eppinger M."/>
            <person name="Mammel M.K."/>
            <person name="Leclerc J.E."/>
            <person name="Ravel J."/>
            <person name="Cebula T.A."/>
        </authorList>
    </citation>
    <scope>NUCLEOTIDE SEQUENCE [LARGE SCALE GENOMIC DNA]</scope>
    <source>
        <strain>EC4115 / EHEC</strain>
    </source>
</reference>
<comment type="catalytic activity">
    <reaction evidence="1">
        <text>urea + 2 H2O + H(+) = hydrogencarbonate + 2 NH4(+)</text>
        <dbReference type="Rhea" id="RHEA:20557"/>
        <dbReference type="ChEBI" id="CHEBI:15377"/>
        <dbReference type="ChEBI" id="CHEBI:15378"/>
        <dbReference type="ChEBI" id="CHEBI:16199"/>
        <dbReference type="ChEBI" id="CHEBI:17544"/>
        <dbReference type="ChEBI" id="CHEBI:28938"/>
        <dbReference type="EC" id="3.5.1.5"/>
    </reaction>
</comment>
<comment type="pathway">
    <text evidence="1">Nitrogen metabolism; urea degradation; CO(2) and NH(3) from urea (urease route): step 1/1.</text>
</comment>
<comment type="subunit">
    <text evidence="1">Heterotrimer of UreA (gamma), UreB (beta) and UreC (alpha) subunits. Three heterotrimers associate to form the active enzyme.</text>
</comment>
<comment type="subcellular location">
    <subcellularLocation>
        <location evidence="1">Cytoplasm</location>
    </subcellularLocation>
</comment>
<comment type="similarity">
    <text evidence="1">Belongs to the urease beta subunit family.</text>
</comment>